<reference key="1">
    <citation type="journal article" date="2005" name="J. Bacteriol.">
        <title>Insights into genome plasticity and pathogenicity of the plant pathogenic Bacterium Xanthomonas campestris pv. vesicatoria revealed by the complete genome sequence.</title>
        <authorList>
            <person name="Thieme F."/>
            <person name="Koebnik R."/>
            <person name="Bekel T."/>
            <person name="Berger C."/>
            <person name="Boch J."/>
            <person name="Buettner D."/>
            <person name="Caldana C."/>
            <person name="Gaigalat L."/>
            <person name="Goesmann A."/>
            <person name="Kay S."/>
            <person name="Kirchner O."/>
            <person name="Lanz C."/>
            <person name="Linke B."/>
            <person name="McHardy A.C."/>
            <person name="Meyer F."/>
            <person name="Mittenhuber G."/>
            <person name="Nies D.H."/>
            <person name="Niesbach-Kloesgen U."/>
            <person name="Patschkowski T."/>
            <person name="Rueckert C."/>
            <person name="Rupp O."/>
            <person name="Schneiker S."/>
            <person name="Schuster S.C."/>
            <person name="Vorhoelter F.J."/>
            <person name="Weber E."/>
            <person name="Puehler A."/>
            <person name="Bonas U."/>
            <person name="Bartels D."/>
            <person name="Kaiser O."/>
        </authorList>
    </citation>
    <scope>NUCLEOTIDE SEQUENCE [LARGE SCALE GENOMIC DNA]</scope>
    <source>
        <strain>85-10</strain>
    </source>
</reference>
<keyword id="KW-0066">ATP synthesis</keyword>
<keyword id="KW-0997">Cell inner membrane</keyword>
<keyword id="KW-1003">Cell membrane</keyword>
<keyword id="KW-0139">CF(1)</keyword>
<keyword id="KW-0375">Hydrogen ion transport</keyword>
<keyword id="KW-0406">Ion transport</keyword>
<keyword id="KW-0472">Membrane</keyword>
<keyword id="KW-0813">Transport</keyword>
<evidence type="ECO:0000255" key="1">
    <source>
        <dbReference type="HAMAP-Rule" id="MF_01416"/>
    </source>
</evidence>
<gene>
    <name evidence="1" type="primary">atpH</name>
    <name type="ordered locus">XCV3770</name>
</gene>
<sequence>MSQALTLARPYGRAAFAIAREGGNFAPWSDALAFSAQVAGDPRVAALLLNPALGQEQAVTLLAPPQAGEDYLRFLGVLADAQRLSLLPEVAGLYEQLRAEAEHVVKATVTSAAAMSQTELDTIAAALKKRFGRDVDITTAVDASLIGGAVIDTGDVVIDGSLKGKLARLQSSLAH</sequence>
<protein>
    <recommendedName>
        <fullName evidence="1">ATP synthase subunit delta</fullName>
    </recommendedName>
    <alternativeName>
        <fullName evidence="1">ATP synthase F(1) sector subunit delta</fullName>
    </alternativeName>
    <alternativeName>
        <fullName evidence="1">F-type ATPase subunit delta</fullName>
        <shortName evidence="1">F-ATPase subunit delta</shortName>
    </alternativeName>
</protein>
<name>ATPD_XANE5</name>
<accession>Q3BP12</accession>
<feature type="chain" id="PRO_1000184836" description="ATP synthase subunit delta">
    <location>
        <begin position="1"/>
        <end position="175"/>
    </location>
</feature>
<dbReference type="EMBL" id="AM039952">
    <property type="protein sequence ID" value="CAJ25501.1"/>
    <property type="molecule type" value="Genomic_DNA"/>
</dbReference>
<dbReference type="RefSeq" id="WP_008571041.1">
    <property type="nucleotide sequence ID" value="NZ_CP017190.1"/>
</dbReference>
<dbReference type="SMR" id="Q3BP12"/>
<dbReference type="STRING" id="456327.BJD11_03815"/>
<dbReference type="KEGG" id="xcv:XCV3770"/>
<dbReference type="eggNOG" id="COG0712">
    <property type="taxonomic scope" value="Bacteria"/>
</dbReference>
<dbReference type="HOGENOM" id="CLU_085114_3_0_6"/>
<dbReference type="Proteomes" id="UP000007069">
    <property type="component" value="Chromosome"/>
</dbReference>
<dbReference type="GO" id="GO:0005886">
    <property type="term" value="C:plasma membrane"/>
    <property type="evidence" value="ECO:0007669"/>
    <property type="project" value="UniProtKB-SubCell"/>
</dbReference>
<dbReference type="GO" id="GO:0045259">
    <property type="term" value="C:proton-transporting ATP synthase complex"/>
    <property type="evidence" value="ECO:0007669"/>
    <property type="project" value="UniProtKB-KW"/>
</dbReference>
<dbReference type="GO" id="GO:0046933">
    <property type="term" value="F:proton-transporting ATP synthase activity, rotational mechanism"/>
    <property type="evidence" value="ECO:0007669"/>
    <property type="project" value="UniProtKB-UniRule"/>
</dbReference>
<dbReference type="Gene3D" id="1.10.520.20">
    <property type="entry name" value="N-terminal domain of the delta subunit of the F1F0-ATP synthase"/>
    <property type="match status" value="1"/>
</dbReference>
<dbReference type="HAMAP" id="MF_01416">
    <property type="entry name" value="ATP_synth_delta_bact"/>
    <property type="match status" value="1"/>
</dbReference>
<dbReference type="InterPro" id="IPR026015">
    <property type="entry name" value="ATP_synth_OSCP/delta_N_sf"/>
</dbReference>
<dbReference type="InterPro" id="IPR000711">
    <property type="entry name" value="ATPase_OSCP/dsu"/>
</dbReference>
<dbReference type="NCBIfam" id="TIGR01145">
    <property type="entry name" value="ATP_synt_delta"/>
    <property type="match status" value="1"/>
</dbReference>
<dbReference type="NCBIfam" id="NF004402">
    <property type="entry name" value="PRK05758.2-2"/>
    <property type="match status" value="1"/>
</dbReference>
<dbReference type="PANTHER" id="PTHR11910">
    <property type="entry name" value="ATP SYNTHASE DELTA CHAIN"/>
    <property type="match status" value="1"/>
</dbReference>
<dbReference type="Pfam" id="PF00213">
    <property type="entry name" value="OSCP"/>
    <property type="match status" value="1"/>
</dbReference>
<dbReference type="PRINTS" id="PR00125">
    <property type="entry name" value="ATPASEDELTA"/>
</dbReference>
<dbReference type="SUPFAM" id="SSF47928">
    <property type="entry name" value="N-terminal domain of the delta subunit of the F1F0-ATP synthase"/>
    <property type="match status" value="1"/>
</dbReference>
<proteinExistence type="inferred from homology"/>
<organism>
    <name type="scientific">Xanthomonas euvesicatoria pv. vesicatoria (strain 85-10)</name>
    <name type="common">Xanthomonas campestris pv. vesicatoria</name>
    <dbReference type="NCBI Taxonomy" id="316273"/>
    <lineage>
        <taxon>Bacteria</taxon>
        <taxon>Pseudomonadati</taxon>
        <taxon>Pseudomonadota</taxon>
        <taxon>Gammaproteobacteria</taxon>
        <taxon>Lysobacterales</taxon>
        <taxon>Lysobacteraceae</taxon>
        <taxon>Xanthomonas</taxon>
    </lineage>
</organism>
<comment type="function">
    <text evidence="1">F(1)F(0) ATP synthase produces ATP from ADP in the presence of a proton or sodium gradient. F-type ATPases consist of two structural domains, F(1) containing the extramembraneous catalytic core and F(0) containing the membrane proton channel, linked together by a central stalk and a peripheral stalk. During catalysis, ATP synthesis in the catalytic domain of F(1) is coupled via a rotary mechanism of the central stalk subunits to proton translocation.</text>
</comment>
<comment type="function">
    <text evidence="1">This protein is part of the stalk that links CF(0) to CF(1). It either transmits conformational changes from CF(0) to CF(1) or is implicated in proton conduction.</text>
</comment>
<comment type="subunit">
    <text evidence="1">F-type ATPases have 2 components, F(1) - the catalytic core - and F(0) - the membrane proton channel. F(1) has five subunits: alpha(3), beta(3), gamma(1), delta(1), epsilon(1). F(0) has three main subunits: a(1), b(2) and c(10-14). The alpha and beta chains form an alternating ring which encloses part of the gamma chain. F(1) is attached to F(0) by a central stalk formed by the gamma and epsilon chains, while a peripheral stalk is formed by the delta and b chains.</text>
</comment>
<comment type="subcellular location">
    <subcellularLocation>
        <location evidence="1">Cell inner membrane</location>
        <topology evidence="1">Peripheral membrane protein</topology>
    </subcellularLocation>
</comment>
<comment type="similarity">
    <text evidence="1">Belongs to the ATPase delta chain family.</text>
</comment>